<gene>
    <name evidence="1" type="primary">petD</name>
    <name type="ordered locus">Tery_1136</name>
</gene>
<comment type="function">
    <text evidence="1">Component of the cytochrome b6-f complex, which mediates electron transfer between photosystem II (PSII) and photosystem I (PSI), cyclic electron flow around PSI, and state transitions.</text>
</comment>
<comment type="subunit">
    <text evidence="1">The 4 large subunits of the cytochrome b6-f complex are cytochrome b6, subunit IV (17 kDa polypeptide, PetD), cytochrome f and the Rieske protein, while the 4 small subunits are PetG, PetL, PetM and PetN. The complex functions as a dimer.</text>
</comment>
<comment type="subcellular location">
    <subcellularLocation>
        <location evidence="1">Cellular thylakoid membrane</location>
        <topology evidence="1">Multi-pass membrane protein</topology>
    </subcellularLocation>
</comment>
<comment type="similarity">
    <text evidence="1">Belongs to the cytochrome b family. PetD subfamily.</text>
</comment>
<protein>
    <recommendedName>
        <fullName evidence="1">Cytochrome b6-f complex subunit 4</fullName>
    </recommendedName>
    <alternativeName>
        <fullName evidence="1">17 kDa polypeptide</fullName>
    </alternativeName>
</protein>
<sequence length="160" mass="17554">MSTLKKPDLSDPQLRAKLAKGMGHNYYGEPAWPNDLLYIFPVVIVGTIALCVGLAVLDPAMIGEPADPFATPLEILPEWYFWPVFQILRVVPNKLLGIVAMASIPLGLMLVPFIESVNKFQNPFRRPVATAVFLFGTAVTLWLGIGATLPIDKSLTFGLF</sequence>
<name>PETD_TRIEI</name>
<accession>Q116S6</accession>
<evidence type="ECO:0000255" key="1">
    <source>
        <dbReference type="HAMAP-Rule" id="MF_01344"/>
    </source>
</evidence>
<feature type="chain" id="PRO_1000054904" description="Cytochrome b6-f complex subunit 4">
    <location>
        <begin position="1"/>
        <end position="160"/>
    </location>
</feature>
<feature type="transmembrane region" description="Helical" evidence="1">
    <location>
        <begin position="36"/>
        <end position="56"/>
    </location>
</feature>
<feature type="transmembrane region" description="Helical" evidence="1">
    <location>
        <begin position="95"/>
        <end position="115"/>
    </location>
</feature>
<feature type="transmembrane region" description="Helical" evidence="1">
    <location>
        <begin position="131"/>
        <end position="151"/>
    </location>
</feature>
<dbReference type="EMBL" id="CP000393">
    <property type="protein sequence ID" value="ABG50498.1"/>
    <property type="molecule type" value="Genomic_DNA"/>
</dbReference>
<dbReference type="RefSeq" id="WP_011610884.1">
    <property type="nucleotide sequence ID" value="NC_008312.1"/>
</dbReference>
<dbReference type="SMR" id="Q116S6"/>
<dbReference type="STRING" id="203124.Tery_1136"/>
<dbReference type="KEGG" id="ter:Tery_1136"/>
<dbReference type="eggNOG" id="COG1290">
    <property type="taxonomic scope" value="Bacteria"/>
</dbReference>
<dbReference type="HOGENOM" id="CLU_112652_0_0_3"/>
<dbReference type="OrthoDB" id="529454at2"/>
<dbReference type="GO" id="GO:0031676">
    <property type="term" value="C:plasma membrane-derived thylakoid membrane"/>
    <property type="evidence" value="ECO:0007669"/>
    <property type="project" value="UniProtKB-SubCell"/>
</dbReference>
<dbReference type="GO" id="GO:0045158">
    <property type="term" value="F:electron transporter, transferring electrons within cytochrome b6/f complex of photosystem II activity"/>
    <property type="evidence" value="ECO:0007669"/>
    <property type="project" value="UniProtKB-UniRule"/>
</dbReference>
<dbReference type="GO" id="GO:0045156">
    <property type="term" value="F:electron transporter, transferring electrons within the cyclic electron transport pathway of photosynthesis activity"/>
    <property type="evidence" value="ECO:0007669"/>
    <property type="project" value="InterPro"/>
</dbReference>
<dbReference type="GO" id="GO:0008121">
    <property type="term" value="F:ubiquinol-cytochrome-c reductase activity"/>
    <property type="evidence" value="ECO:0007669"/>
    <property type="project" value="TreeGrafter"/>
</dbReference>
<dbReference type="GO" id="GO:0009767">
    <property type="term" value="P:photosynthetic electron transport chain"/>
    <property type="evidence" value="ECO:0007669"/>
    <property type="project" value="InterPro"/>
</dbReference>
<dbReference type="CDD" id="cd00290">
    <property type="entry name" value="cytochrome_b_C"/>
    <property type="match status" value="1"/>
</dbReference>
<dbReference type="FunFam" id="1.10.287.980:FF:000001">
    <property type="entry name" value="Cytochrome b6-f complex subunit 4"/>
    <property type="match status" value="1"/>
</dbReference>
<dbReference type="FunFam" id="1.20.5.510:FF:000002">
    <property type="entry name" value="Cytochrome b6-f complex subunit 4"/>
    <property type="match status" value="1"/>
</dbReference>
<dbReference type="Gene3D" id="1.10.287.980">
    <property type="entry name" value="plastocyanin oxidoreductase"/>
    <property type="match status" value="1"/>
</dbReference>
<dbReference type="Gene3D" id="1.20.5.510">
    <property type="entry name" value="Single helix bin"/>
    <property type="match status" value="1"/>
</dbReference>
<dbReference type="HAMAP" id="MF_01344">
    <property type="entry name" value="Cytb6_f_subIV"/>
    <property type="match status" value="1"/>
</dbReference>
<dbReference type="InterPro" id="IPR005798">
    <property type="entry name" value="Cyt_b/b6_C"/>
</dbReference>
<dbReference type="InterPro" id="IPR036150">
    <property type="entry name" value="Cyt_b/b6_C_sf"/>
</dbReference>
<dbReference type="InterPro" id="IPR005870">
    <property type="entry name" value="Cyt_b6/f_cplx_suIV"/>
</dbReference>
<dbReference type="InterPro" id="IPR048260">
    <property type="entry name" value="Cytochrome_b_C_euk/bac"/>
</dbReference>
<dbReference type="NCBIfam" id="TIGR01156">
    <property type="entry name" value="cytb6_f_IV"/>
    <property type="match status" value="1"/>
</dbReference>
<dbReference type="PANTHER" id="PTHR19271">
    <property type="entry name" value="CYTOCHROME B"/>
    <property type="match status" value="1"/>
</dbReference>
<dbReference type="PANTHER" id="PTHR19271:SF41">
    <property type="entry name" value="CYTOCHROME B_B6 C-TERMINAL REGION PROFILE DOMAIN-CONTAINING PROTEIN"/>
    <property type="match status" value="1"/>
</dbReference>
<dbReference type="Pfam" id="PF00032">
    <property type="entry name" value="Cytochrom_B_C"/>
    <property type="match status" value="1"/>
</dbReference>
<dbReference type="PIRSF" id="PIRSF000033">
    <property type="entry name" value="B6f_17K"/>
    <property type="match status" value="1"/>
</dbReference>
<dbReference type="SUPFAM" id="SSF81648">
    <property type="entry name" value="a domain/subunit of cytochrome bc1 complex (Ubiquinol-cytochrome c reductase)"/>
    <property type="match status" value="1"/>
</dbReference>
<dbReference type="PROSITE" id="PS51003">
    <property type="entry name" value="CYTB_CTER"/>
    <property type="match status" value="1"/>
</dbReference>
<reference key="1">
    <citation type="journal article" date="2015" name="Proc. Natl. Acad. Sci. U.S.A.">
        <title>Trichodesmium genome maintains abundant, widespread noncoding DNA in situ, despite oligotrophic lifestyle.</title>
        <authorList>
            <person name="Walworth N."/>
            <person name="Pfreundt U."/>
            <person name="Nelson W.C."/>
            <person name="Mincer T."/>
            <person name="Heidelberg J.F."/>
            <person name="Fu F."/>
            <person name="Waterbury J.B."/>
            <person name="Glavina del Rio T."/>
            <person name="Goodwin L."/>
            <person name="Kyrpides N.C."/>
            <person name="Land M.L."/>
            <person name="Woyke T."/>
            <person name="Hutchins D.A."/>
            <person name="Hess W.R."/>
            <person name="Webb E.A."/>
        </authorList>
    </citation>
    <scope>NUCLEOTIDE SEQUENCE [LARGE SCALE GENOMIC DNA]</scope>
    <source>
        <strain>IMS101</strain>
    </source>
</reference>
<organism>
    <name type="scientific">Trichodesmium erythraeum (strain IMS101)</name>
    <dbReference type="NCBI Taxonomy" id="203124"/>
    <lineage>
        <taxon>Bacteria</taxon>
        <taxon>Bacillati</taxon>
        <taxon>Cyanobacteriota</taxon>
        <taxon>Cyanophyceae</taxon>
        <taxon>Oscillatoriophycideae</taxon>
        <taxon>Oscillatoriales</taxon>
        <taxon>Microcoleaceae</taxon>
        <taxon>Trichodesmium</taxon>
    </lineage>
</organism>
<keyword id="KW-0249">Electron transport</keyword>
<keyword id="KW-0472">Membrane</keyword>
<keyword id="KW-0602">Photosynthesis</keyword>
<keyword id="KW-0793">Thylakoid</keyword>
<keyword id="KW-0812">Transmembrane</keyword>
<keyword id="KW-1133">Transmembrane helix</keyword>
<keyword id="KW-0813">Transport</keyword>
<proteinExistence type="inferred from homology"/>